<feature type="signal peptide" evidence="1">
    <location>
        <begin position="1"/>
        <end position="21"/>
    </location>
</feature>
<feature type="chain" id="PRO_0000009235" description="Fimbrial protein">
    <location>
        <begin position="22"/>
        <end position="165"/>
    </location>
</feature>
<feature type="sequence conflict" description="In Ref. 2 and 3." evidence="2" ref="2 3">
    <original>V</original>
    <variation>E</variation>
    <location>
        <position position="30"/>
    </location>
</feature>
<feature type="sequence conflict" description="In Ref. 4; AA sequence." evidence="2" ref="4">
    <original>GA</original>
    <variation>QW</variation>
    <location>
        <begin position="84"/>
        <end position="85"/>
    </location>
</feature>
<feature type="strand" evidence="3">
    <location>
        <begin position="29"/>
        <end position="36"/>
    </location>
</feature>
<gene>
    <name type="primary">sefA</name>
    <name type="synonym">sef14</name>
</gene>
<protein>
    <recommendedName>
        <fullName>Fimbrial protein</fullName>
    </recommendedName>
    <alternativeName>
        <fullName>SEF 14</fullName>
    </alternativeName>
</protein>
<evidence type="ECO:0000269" key="1">
    <source>
    </source>
</evidence>
<evidence type="ECO:0000305" key="2"/>
<evidence type="ECO:0007829" key="3">
    <source>
        <dbReference type="PDB" id="3UIY"/>
    </source>
</evidence>
<organism>
    <name type="scientific">Salmonella enteritidis</name>
    <dbReference type="NCBI Taxonomy" id="149539"/>
    <lineage>
        <taxon>Bacteria</taxon>
        <taxon>Pseudomonadati</taxon>
        <taxon>Pseudomonadota</taxon>
        <taxon>Gammaproteobacteria</taxon>
        <taxon>Enterobacterales</taxon>
        <taxon>Enterobacteriaceae</taxon>
        <taxon>Salmonella</taxon>
    </lineage>
</organism>
<comment type="function">
    <text>Structural subunit of the sef14 fimbriae.</text>
</comment>
<comment type="subcellular location">
    <subcellularLocation>
        <location>Fimbrium</location>
    </subcellularLocation>
</comment>
<keyword id="KW-0002">3D-structure</keyword>
<keyword id="KW-0903">Direct protein sequencing</keyword>
<keyword id="KW-0281">Fimbrium</keyword>
<keyword id="KW-0732">Signal</keyword>
<sequence>MRKSASAVAVLALIACGSAHAAGFVGNKAVVQAAVTIAAQNTTSANWSQDPGFTGPAVAAGQKVGTLSITATGPHNSVSIAGKGASVSGGVATVPFVDGQGQPVFRGRIQGANINDQANTGIDGLAGWRVASSQETLNVPVTTFGKSTLPAGTFTATFYVQQYQN</sequence>
<dbReference type="EMBL" id="L11008">
    <property type="protein sequence ID" value="AAA27219.1"/>
    <property type="molecule type" value="Genomic_DNA"/>
</dbReference>
<dbReference type="EMBL" id="L03833">
    <property type="protein sequence ID" value="AAA71892.1"/>
    <property type="molecule type" value="Unassigned_DNA"/>
</dbReference>
<dbReference type="EMBL" id="X98516">
    <property type="protein sequence ID" value="CAA67141.1"/>
    <property type="molecule type" value="Genomic_DNA"/>
</dbReference>
<dbReference type="PIR" id="A40618">
    <property type="entry name" value="A40618"/>
</dbReference>
<dbReference type="RefSeq" id="WP_001676218.1">
    <property type="nucleotide sequence ID" value="NZ_WIDA01000014.1"/>
</dbReference>
<dbReference type="PDB" id="3UIY">
    <property type="method" value="X-ray"/>
    <property type="resolution" value="3.10 A"/>
    <property type="chains" value="A=23-39"/>
</dbReference>
<dbReference type="PDB" id="3UIZ">
    <property type="method" value="X-ray"/>
    <property type="resolution" value="3.10 A"/>
    <property type="chains" value="A/B/C/D/E/F=23-39"/>
</dbReference>
<dbReference type="PDBsum" id="3UIY"/>
<dbReference type="PDBsum" id="3UIZ"/>
<dbReference type="SMR" id="P12061"/>
<dbReference type="PATRIC" id="fig|149539.316.peg.4553"/>
<dbReference type="EvolutionaryTrace" id="P12061"/>
<dbReference type="PHI-base" id="PHI:3704"/>
<dbReference type="GO" id="GO:0009289">
    <property type="term" value="C:pilus"/>
    <property type="evidence" value="ECO:0007669"/>
    <property type="project" value="UniProtKB-SubCell"/>
</dbReference>
<dbReference type="InterPro" id="IPR010498">
    <property type="entry name" value="SefA"/>
</dbReference>
<dbReference type="NCBIfam" id="NF011771">
    <property type="entry name" value="PRK15228.1"/>
    <property type="match status" value="1"/>
</dbReference>
<dbReference type="Pfam" id="PF06443">
    <property type="entry name" value="SEF14_adhesin"/>
    <property type="match status" value="1"/>
</dbReference>
<dbReference type="PIRSF" id="PIRSF020728">
    <property type="entry name" value="SEF14_adhesin"/>
    <property type="match status" value="1"/>
</dbReference>
<name>FM_SALEN</name>
<proteinExistence type="evidence at protein level"/>
<accession>P12061</accession>
<reference key="1">
    <citation type="journal article" date="1993" name="J. Bacteriol.">
        <title>Characterization of three fimbrial genes, sefABC, of Salmonella enteritidis.</title>
        <authorList>
            <person name="Clouthier S.C."/>
            <person name="Mueller K.-H."/>
            <person name="Doran J.L."/>
            <person name="Collinson S.K."/>
            <person name="Kay W.W."/>
        </authorList>
    </citation>
    <scope>NUCLEOTIDE SEQUENCE [GENOMIC DNA]</scope>
    <source>
        <strain>27655-3B</strain>
    </source>
</reference>
<reference key="2">
    <citation type="journal article" date="1990" name="J. Clin. Microbiol.">
        <title>Detection of a novel fimbrial structure on the surface of Salmonella enteritidis by using a monoclonal antibody.</title>
        <authorList>
            <person name="Thorns C.J."/>
            <person name="Sojka M.G."/>
            <person name="Chasey D.C."/>
        </authorList>
    </citation>
    <scope>NUCLEOTIDE SEQUENCE [GENOMIC DNA]</scope>
</reference>
<reference key="3">
    <citation type="submission" date="1996-06" db="EMBL/GenBank/DDBJ databases">
        <authorList>
            <person name="Ogunniyi A.D."/>
            <person name="Kotlarski I."/>
            <person name="Morona R."/>
            <person name="Manning P.A."/>
        </authorList>
    </citation>
    <scope>NUCLEOTIDE SEQUENCE [GENOMIC DNA]</scope>
</reference>
<reference key="4">
    <citation type="journal article" date="1986" name="J. Bacteriol.">
        <title>Purification and characterization of fimbriae from Salmonella enteritidis.</title>
        <authorList>
            <person name="Feutrier J."/>
            <person name="Kay W.W."/>
            <person name="Trust T.J."/>
        </authorList>
    </citation>
    <scope>PROTEIN SEQUENCE OF 22-85</scope>
</reference>